<sequence>MVKVLGLVAILLIVLAGNVLSYDRQGTRKNLVIHPTNEDDPTFPDQVHISLVGPDKMRISWITQSSISPSVVYGTVSGKYEGSANGTSSSYHYLLIYRSGQINDVVIGPLKPNTVYYYKCGGPSSTQEFSFRTPPSKFPIKFAVSGDLGTSEWSKSTLEHVSKWDYDVFILPGDLSYANMYQPLWDTFGRLVQPLASQRPWMVTHGNHELEKIPILHSNPFTAYNKRWRMPFEESGSSSNLYYSFNVYGVHIIMLGSYTDFEPGSEQYQWLENNLKKIDRKTTPWVVAVVHAPWYNSNEAHQGEKESVEMKESMETLLYKARVDLVFAGHVHAYERFSRVYQDKFDKCGPVYINIGDGGNLEGLATKYRDPNPEISLFREASFGHGQLVVENATHARWEWHRNDDDVSVEKDSVWLTSLLADSSCKI</sequence>
<feature type="signal peptide" evidence="2">
    <location>
        <begin position="1"/>
        <end position="21"/>
    </location>
</feature>
<feature type="chain" id="PRO_0000372823" description="Probable purple acid phosphatase 20">
    <location>
        <begin position="22"/>
        <end position="427"/>
    </location>
</feature>
<feature type="active site" description="Proton donor" evidence="1">
    <location>
        <position position="301"/>
    </location>
</feature>
<feature type="binding site" evidence="1">
    <location>
        <position position="147"/>
    </location>
    <ligand>
        <name>Fe cation</name>
        <dbReference type="ChEBI" id="CHEBI:24875"/>
    </ligand>
</feature>
<feature type="binding site" evidence="1">
    <location>
        <position position="174"/>
    </location>
    <ligand>
        <name>Fe cation</name>
        <dbReference type="ChEBI" id="CHEBI:24875"/>
    </ligand>
</feature>
<feature type="binding site" evidence="1">
    <location>
        <position position="174"/>
    </location>
    <ligand>
        <name>Zn(2+)</name>
        <dbReference type="ChEBI" id="CHEBI:29105"/>
    </ligand>
</feature>
<feature type="binding site" evidence="1">
    <location>
        <position position="177"/>
    </location>
    <ligand>
        <name>Fe cation</name>
        <dbReference type="ChEBI" id="CHEBI:24875"/>
    </ligand>
</feature>
<feature type="binding site" evidence="1">
    <location>
        <position position="207"/>
    </location>
    <ligand>
        <name>substrate</name>
    </ligand>
</feature>
<feature type="binding site" evidence="1">
    <location>
        <position position="207"/>
    </location>
    <ligand>
        <name>Zn(2+)</name>
        <dbReference type="ChEBI" id="CHEBI:29105"/>
    </ligand>
</feature>
<feature type="binding site" evidence="1">
    <location>
        <position position="291"/>
    </location>
    <ligand>
        <name>Zn(2+)</name>
        <dbReference type="ChEBI" id="CHEBI:29105"/>
    </ligand>
</feature>
<feature type="binding site" evidence="1">
    <location>
        <begin position="330"/>
        <end position="332"/>
    </location>
    <ligand>
        <name>substrate</name>
    </ligand>
</feature>
<feature type="binding site" evidence="1">
    <location>
        <position position="330"/>
    </location>
    <ligand>
        <name>Zn(2+)</name>
        <dbReference type="ChEBI" id="CHEBI:29105"/>
    </ligand>
</feature>
<feature type="binding site" evidence="1">
    <location>
        <position position="332"/>
    </location>
    <ligand>
        <name>Fe cation</name>
        <dbReference type="ChEBI" id="CHEBI:24875"/>
    </ligand>
</feature>
<feature type="glycosylation site" description="N-linked (GlcNAc...) asparagine" evidence="2">
    <location>
        <position position="85"/>
    </location>
</feature>
<feature type="glycosylation site" description="N-linked (GlcNAc...) asparagine" evidence="2">
    <location>
        <position position="392"/>
    </location>
</feature>
<feature type="splice variant" id="VSP_037200" description="In isoform 2." evidence="4">
    <original>SRVYQDKFDKCGPVYINIGDGGNLEGLATKYRDPNPEISLFREASFGH</original>
    <variation>VIECTKISSTNVVRFILTSEMVGI</variation>
    <location>
        <begin position="338"/>
        <end position="385"/>
    </location>
</feature>
<feature type="splice variant" id="VSP_038048" description="In isoform 2." evidence="4">
    <location>
        <begin position="386"/>
        <end position="427"/>
    </location>
</feature>
<reference key="1">
    <citation type="journal article" date="2002" name="J. Biol. Chem.">
        <title>Purple acid phosphatases of Arabidopsis thaliana. Comparative analysis and differential regulation by phosphate deprivation.</title>
        <authorList>
            <person name="Li D."/>
            <person name="Zhu H."/>
            <person name="Liu K."/>
            <person name="Liu X."/>
            <person name="Leggewie G."/>
            <person name="Udvardi M."/>
            <person name="Wang D."/>
        </authorList>
    </citation>
    <scope>NUCLEOTIDE SEQUENCE [MRNA] (ISOFORM 1)</scope>
    <scope>GENE FAMILY</scope>
    <scope>NOMENCLATURE</scope>
    <source>
        <strain>cv. Col-1</strain>
    </source>
</reference>
<reference key="2">
    <citation type="journal article" date="2000" name="Nature">
        <title>Sequence and analysis of chromosome 3 of the plant Arabidopsis thaliana.</title>
        <authorList>
            <person name="Salanoubat M."/>
            <person name="Lemcke K."/>
            <person name="Rieger M."/>
            <person name="Ansorge W."/>
            <person name="Unseld M."/>
            <person name="Fartmann B."/>
            <person name="Valle G."/>
            <person name="Bloecker H."/>
            <person name="Perez-Alonso M."/>
            <person name="Obermaier B."/>
            <person name="Delseny M."/>
            <person name="Boutry M."/>
            <person name="Grivell L.A."/>
            <person name="Mache R."/>
            <person name="Puigdomenech P."/>
            <person name="De Simone V."/>
            <person name="Choisne N."/>
            <person name="Artiguenave F."/>
            <person name="Robert C."/>
            <person name="Brottier P."/>
            <person name="Wincker P."/>
            <person name="Cattolico L."/>
            <person name="Weissenbach J."/>
            <person name="Saurin W."/>
            <person name="Quetier F."/>
            <person name="Schaefer M."/>
            <person name="Mueller-Auer S."/>
            <person name="Gabel C."/>
            <person name="Fuchs M."/>
            <person name="Benes V."/>
            <person name="Wurmbach E."/>
            <person name="Drzonek H."/>
            <person name="Erfle H."/>
            <person name="Jordan N."/>
            <person name="Bangert S."/>
            <person name="Wiedelmann R."/>
            <person name="Kranz H."/>
            <person name="Voss H."/>
            <person name="Holland R."/>
            <person name="Brandt P."/>
            <person name="Nyakatura G."/>
            <person name="Vezzi A."/>
            <person name="D'Angelo M."/>
            <person name="Pallavicini A."/>
            <person name="Toppo S."/>
            <person name="Simionati B."/>
            <person name="Conrad A."/>
            <person name="Hornischer K."/>
            <person name="Kauer G."/>
            <person name="Loehnert T.-H."/>
            <person name="Nordsiek G."/>
            <person name="Reichelt J."/>
            <person name="Scharfe M."/>
            <person name="Schoen O."/>
            <person name="Bargues M."/>
            <person name="Terol J."/>
            <person name="Climent J."/>
            <person name="Navarro P."/>
            <person name="Collado C."/>
            <person name="Perez-Perez A."/>
            <person name="Ottenwaelder B."/>
            <person name="Duchemin D."/>
            <person name="Cooke R."/>
            <person name="Laudie M."/>
            <person name="Berger-Llauro C."/>
            <person name="Purnelle B."/>
            <person name="Masuy D."/>
            <person name="de Haan M."/>
            <person name="Maarse A.C."/>
            <person name="Alcaraz J.-P."/>
            <person name="Cottet A."/>
            <person name="Casacuberta E."/>
            <person name="Monfort A."/>
            <person name="Argiriou A."/>
            <person name="Flores M."/>
            <person name="Liguori R."/>
            <person name="Vitale D."/>
            <person name="Mannhaupt G."/>
            <person name="Haase D."/>
            <person name="Schoof H."/>
            <person name="Rudd S."/>
            <person name="Zaccaria P."/>
            <person name="Mewes H.-W."/>
            <person name="Mayer K.F.X."/>
            <person name="Kaul S."/>
            <person name="Town C.D."/>
            <person name="Koo H.L."/>
            <person name="Tallon L.J."/>
            <person name="Jenkins J."/>
            <person name="Rooney T."/>
            <person name="Rizzo M."/>
            <person name="Walts A."/>
            <person name="Utterback T."/>
            <person name="Fujii C.Y."/>
            <person name="Shea T.P."/>
            <person name="Creasy T.H."/>
            <person name="Haas B."/>
            <person name="Maiti R."/>
            <person name="Wu D."/>
            <person name="Peterson J."/>
            <person name="Van Aken S."/>
            <person name="Pai G."/>
            <person name="Militscher J."/>
            <person name="Sellers P."/>
            <person name="Gill J.E."/>
            <person name="Feldblyum T.V."/>
            <person name="Preuss D."/>
            <person name="Lin X."/>
            <person name="Nierman W.C."/>
            <person name="Salzberg S.L."/>
            <person name="White O."/>
            <person name="Venter J.C."/>
            <person name="Fraser C.M."/>
            <person name="Kaneko T."/>
            <person name="Nakamura Y."/>
            <person name="Sato S."/>
            <person name="Kato T."/>
            <person name="Asamizu E."/>
            <person name="Sasamoto S."/>
            <person name="Kimura T."/>
            <person name="Idesawa K."/>
            <person name="Kawashima K."/>
            <person name="Kishida Y."/>
            <person name="Kiyokawa C."/>
            <person name="Kohara M."/>
            <person name="Matsumoto M."/>
            <person name="Matsuno A."/>
            <person name="Muraki A."/>
            <person name="Nakayama S."/>
            <person name="Nakazaki N."/>
            <person name="Shinpo S."/>
            <person name="Takeuchi C."/>
            <person name="Wada T."/>
            <person name="Watanabe A."/>
            <person name="Yamada M."/>
            <person name="Yasuda M."/>
            <person name="Tabata S."/>
        </authorList>
    </citation>
    <scope>NUCLEOTIDE SEQUENCE [LARGE SCALE GENOMIC DNA]</scope>
    <source>
        <strain>cv. Columbia</strain>
    </source>
</reference>
<reference key="3">
    <citation type="journal article" date="2017" name="Plant J.">
        <title>Araport11: a complete reannotation of the Arabidopsis thaliana reference genome.</title>
        <authorList>
            <person name="Cheng C.Y."/>
            <person name="Krishnakumar V."/>
            <person name="Chan A.P."/>
            <person name="Thibaud-Nissen F."/>
            <person name="Schobel S."/>
            <person name="Town C.D."/>
        </authorList>
    </citation>
    <scope>GENOME REANNOTATION</scope>
    <source>
        <strain>cv. Columbia</strain>
    </source>
</reference>
<reference key="4">
    <citation type="submission" date="2006-12" db="EMBL/GenBank/DDBJ databases">
        <title>Arabidopsis ORF clones.</title>
        <authorList>
            <person name="Bautista V.R."/>
            <person name="Kim C.J."/>
            <person name="Chen H."/>
            <person name="Wu S.Y."/>
            <person name="De Los Reyes C."/>
            <person name="Ecker J.R."/>
        </authorList>
    </citation>
    <scope>NUCLEOTIDE SEQUENCE [LARGE SCALE MRNA] (ISOFORM 1)</scope>
    <source>
        <strain>cv. Columbia</strain>
    </source>
</reference>
<reference key="5">
    <citation type="journal article" date="2005" name="Plant Mol. Biol.">
        <title>Expression patterns of purple acid phosphatase genes in Arabidopsis organs and functional analysis of AtPAP23 predominantly transcribed in flower.</title>
        <authorList>
            <person name="Zhu H."/>
            <person name="Qian W."/>
            <person name="Lu X."/>
            <person name="Li D."/>
            <person name="Liu X."/>
            <person name="Liu K."/>
            <person name="Wang D."/>
        </authorList>
    </citation>
    <scope>TISSUE SPECIFICITY</scope>
</reference>
<gene>
    <name type="primary">PAP20</name>
    <name type="synonym">AT4</name>
    <name type="ordered locus">At3g52780</name>
    <name type="ORF">F3C22.180</name>
</gene>
<proteinExistence type="evidence at transcript level"/>
<accession>Q9LXI7</accession>
<accession>Q3EAK8</accession>
<protein>
    <recommendedName>
        <fullName>Probable purple acid phosphatase 20</fullName>
        <ecNumber>3.1.3.2</ecNumber>
    </recommendedName>
</protein>
<name>PPA20_ARATH</name>
<organism>
    <name type="scientific">Arabidopsis thaliana</name>
    <name type="common">Mouse-ear cress</name>
    <dbReference type="NCBI Taxonomy" id="3702"/>
    <lineage>
        <taxon>Eukaryota</taxon>
        <taxon>Viridiplantae</taxon>
        <taxon>Streptophyta</taxon>
        <taxon>Embryophyta</taxon>
        <taxon>Tracheophyta</taxon>
        <taxon>Spermatophyta</taxon>
        <taxon>Magnoliopsida</taxon>
        <taxon>eudicotyledons</taxon>
        <taxon>Gunneridae</taxon>
        <taxon>Pentapetalae</taxon>
        <taxon>rosids</taxon>
        <taxon>malvids</taxon>
        <taxon>Brassicales</taxon>
        <taxon>Brassicaceae</taxon>
        <taxon>Camelineae</taxon>
        <taxon>Arabidopsis</taxon>
    </lineage>
</organism>
<evidence type="ECO:0000250" key="1"/>
<evidence type="ECO:0000255" key="2"/>
<evidence type="ECO:0000269" key="3">
    <source>
    </source>
</evidence>
<evidence type="ECO:0000305" key="4"/>
<comment type="catalytic activity">
    <reaction>
        <text>a phosphate monoester + H2O = an alcohol + phosphate</text>
        <dbReference type="Rhea" id="RHEA:15017"/>
        <dbReference type="ChEBI" id="CHEBI:15377"/>
        <dbReference type="ChEBI" id="CHEBI:30879"/>
        <dbReference type="ChEBI" id="CHEBI:43474"/>
        <dbReference type="ChEBI" id="CHEBI:67140"/>
        <dbReference type="EC" id="3.1.3.2"/>
    </reaction>
</comment>
<comment type="cofactor">
    <cofactor evidence="1">
        <name>Fe cation</name>
        <dbReference type="ChEBI" id="CHEBI:24875"/>
    </cofactor>
    <text evidence="1">Binds 1 Fe cation per subunit.</text>
</comment>
<comment type="cofactor">
    <cofactor evidence="1">
        <name>Zn(2+)</name>
        <dbReference type="ChEBI" id="CHEBI:29105"/>
    </cofactor>
    <text evidence="1">Binds 1 zinc ion per subunit.</text>
</comment>
<comment type="subunit">
    <text evidence="1">Homodimer.</text>
</comment>
<comment type="subcellular location">
    <subcellularLocation>
        <location evidence="1">Secreted</location>
    </subcellularLocation>
</comment>
<comment type="alternative products">
    <event type="alternative splicing"/>
    <isoform>
        <id>Q9LXI7-1</id>
        <name>1</name>
        <sequence type="displayed"/>
    </isoform>
    <isoform>
        <id>Q9LXI7-2</id>
        <name>2</name>
        <sequence type="described" ref="VSP_037200 VSP_038048"/>
    </isoform>
</comment>
<comment type="tissue specificity">
    <text evidence="3">Expressed flowers and siliques.</text>
</comment>
<comment type="miscellaneous">
    <molecule>Isoform 2</molecule>
    <text evidence="4">May be due to a competing donor splice site.</text>
</comment>
<comment type="similarity">
    <text evidence="4">Belongs to the metallophosphoesterase superfamily. Purple acid phosphatase family.</text>
</comment>
<keyword id="KW-0025">Alternative splicing</keyword>
<keyword id="KW-0325">Glycoprotein</keyword>
<keyword id="KW-0378">Hydrolase</keyword>
<keyword id="KW-0408">Iron</keyword>
<keyword id="KW-0479">Metal-binding</keyword>
<keyword id="KW-1185">Reference proteome</keyword>
<keyword id="KW-0964">Secreted</keyword>
<keyword id="KW-0732">Signal</keyword>
<keyword id="KW-0862">Zinc</keyword>
<dbReference type="EC" id="3.1.3.2"/>
<dbReference type="EMBL" id="AF492666">
    <property type="protein sequence ID" value="AAM15915.1"/>
    <property type="molecule type" value="mRNA"/>
</dbReference>
<dbReference type="EMBL" id="AL353912">
    <property type="protein sequence ID" value="CAB89239.1"/>
    <property type="molecule type" value="Genomic_DNA"/>
</dbReference>
<dbReference type="EMBL" id="CP002686">
    <property type="protein sequence ID" value="AEE78992.1"/>
    <property type="molecule type" value="Genomic_DNA"/>
</dbReference>
<dbReference type="EMBL" id="CP002686">
    <property type="protein sequence ID" value="AEE78993.1"/>
    <property type="molecule type" value="Genomic_DNA"/>
</dbReference>
<dbReference type="EMBL" id="BT029748">
    <property type="protein sequence ID" value="ABM06018.1"/>
    <property type="molecule type" value="mRNA"/>
</dbReference>
<dbReference type="PIR" id="T49031">
    <property type="entry name" value="T49031"/>
</dbReference>
<dbReference type="RefSeq" id="NP_190846.1">
    <molecule id="Q9LXI7-1"/>
    <property type="nucleotide sequence ID" value="NM_115138.3"/>
</dbReference>
<dbReference type="RefSeq" id="NP_850686.1">
    <molecule id="Q9LXI7-2"/>
    <property type="nucleotide sequence ID" value="NM_180355.1"/>
</dbReference>
<dbReference type="SMR" id="Q9LXI7"/>
<dbReference type="FunCoup" id="Q9LXI7">
    <property type="interactions" value="101"/>
</dbReference>
<dbReference type="STRING" id="3702.Q9LXI7"/>
<dbReference type="GlyCosmos" id="Q9LXI7">
    <property type="glycosylation" value="2 sites, No reported glycans"/>
</dbReference>
<dbReference type="GlyGen" id="Q9LXI7">
    <property type="glycosylation" value="2 sites"/>
</dbReference>
<dbReference type="PaxDb" id="3702-AT3G52780.1"/>
<dbReference type="ProteomicsDB" id="249021">
    <molecule id="Q9LXI7-1"/>
</dbReference>
<dbReference type="EnsemblPlants" id="AT3G52780.1">
    <molecule id="Q9LXI7-1"/>
    <property type="protein sequence ID" value="AT3G52780.1"/>
    <property type="gene ID" value="AT3G52780"/>
</dbReference>
<dbReference type="EnsemblPlants" id="AT3G52780.2">
    <molecule id="Q9LXI7-2"/>
    <property type="protein sequence ID" value="AT3G52780.2"/>
    <property type="gene ID" value="AT3G52780"/>
</dbReference>
<dbReference type="GeneID" id="824444"/>
<dbReference type="Gramene" id="AT3G52780.1">
    <molecule id="Q9LXI7-1"/>
    <property type="protein sequence ID" value="AT3G52780.1"/>
    <property type="gene ID" value="AT3G52780"/>
</dbReference>
<dbReference type="Gramene" id="AT3G52780.2">
    <molecule id="Q9LXI7-2"/>
    <property type="protein sequence ID" value="AT3G52780.2"/>
    <property type="gene ID" value="AT3G52780"/>
</dbReference>
<dbReference type="KEGG" id="ath:AT3G52780"/>
<dbReference type="Araport" id="AT3G52780"/>
<dbReference type="TAIR" id="AT3G52780">
    <property type="gene designation" value="PAP20"/>
</dbReference>
<dbReference type="eggNOG" id="KOG1378">
    <property type="taxonomic scope" value="Eukaryota"/>
</dbReference>
<dbReference type="HOGENOM" id="CLU_013387_0_0_1"/>
<dbReference type="InParanoid" id="Q9LXI7"/>
<dbReference type="OMA" id="SAGCHTP"/>
<dbReference type="PhylomeDB" id="Q9LXI7"/>
<dbReference type="BioCyc" id="ARA:AT3G52780-MONOMER"/>
<dbReference type="PRO" id="PR:Q9LXI7"/>
<dbReference type="Proteomes" id="UP000006548">
    <property type="component" value="Chromosome 3"/>
</dbReference>
<dbReference type="ExpressionAtlas" id="Q9LXI7">
    <property type="expression patterns" value="baseline and differential"/>
</dbReference>
<dbReference type="GO" id="GO:0005576">
    <property type="term" value="C:extracellular region"/>
    <property type="evidence" value="ECO:0007669"/>
    <property type="project" value="UniProtKB-SubCell"/>
</dbReference>
<dbReference type="GO" id="GO:0003993">
    <property type="term" value="F:acid phosphatase activity"/>
    <property type="evidence" value="ECO:0000250"/>
    <property type="project" value="TAIR"/>
</dbReference>
<dbReference type="GO" id="GO:0046872">
    <property type="term" value="F:metal ion binding"/>
    <property type="evidence" value="ECO:0007669"/>
    <property type="project" value="UniProtKB-KW"/>
</dbReference>
<dbReference type="CDD" id="cd00839">
    <property type="entry name" value="MPP_PAPs"/>
    <property type="match status" value="1"/>
</dbReference>
<dbReference type="Gene3D" id="3.60.21.10">
    <property type="match status" value="1"/>
</dbReference>
<dbReference type="Gene3D" id="2.60.40.380">
    <property type="entry name" value="Purple acid phosphatase-like, N-terminal"/>
    <property type="match status" value="1"/>
</dbReference>
<dbReference type="InterPro" id="IPR004843">
    <property type="entry name" value="Calcineurin-like_PHP_ApaH"/>
</dbReference>
<dbReference type="InterPro" id="IPR029052">
    <property type="entry name" value="Metallo-depent_PP-like"/>
</dbReference>
<dbReference type="InterPro" id="IPR041792">
    <property type="entry name" value="MPP_PAP"/>
</dbReference>
<dbReference type="InterPro" id="IPR039331">
    <property type="entry name" value="PPA-like"/>
</dbReference>
<dbReference type="InterPro" id="IPR008963">
    <property type="entry name" value="Purple_acid_Pase-like_N"/>
</dbReference>
<dbReference type="InterPro" id="IPR015914">
    <property type="entry name" value="Purple_acid_Pase_N"/>
</dbReference>
<dbReference type="InterPro" id="IPR025733">
    <property type="entry name" value="Purple_acid_PPase_C_dom"/>
</dbReference>
<dbReference type="PANTHER" id="PTHR22953">
    <property type="entry name" value="ACID PHOSPHATASE RELATED"/>
    <property type="match status" value="1"/>
</dbReference>
<dbReference type="PANTHER" id="PTHR22953:SF153">
    <property type="entry name" value="PURPLE ACID PHOSPHATASE"/>
    <property type="match status" value="1"/>
</dbReference>
<dbReference type="Pfam" id="PF00149">
    <property type="entry name" value="Metallophos"/>
    <property type="match status" value="1"/>
</dbReference>
<dbReference type="Pfam" id="PF14008">
    <property type="entry name" value="Metallophos_C"/>
    <property type="match status" value="1"/>
</dbReference>
<dbReference type="Pfam" id="PF16656">
    <property type="entry name" value="Pur_ac_phosph_N"/>
    <property type="match status" value="1"/>
</dbReference>
<dbReference type="SUPFAM" id="SSF56300">
    <property type="entry name" value="Metallo-dependent phosphatases"/>
    <property type="match status" value="1"/>
</dbReference>
<dbReference type="SUPFAM" id="SSF49363">
    <property type="entry name" value="Purple acid phosphatase, N-terminal domain"/>
    <property type="match status" value="1"/>
</dbReference>